<dbReference type="EC" id="2.4.2.17" evidence="1"/>
<dbReference type="EMBL" id="AP006841">
    <property type="protein sequence ID" value="BAD49935.1"/>
    <property type="molecule type" value="Genomic_DNA"/>
</dbReference>
<dbReference type="RefSeq" id="WP_005789131.1">
    <property type="nucleotide sequence ID" value="NZ_UYXF01000011.1"/>
</dbReference>
<dbReference type="RefSeq" id="YP_100469.1">
    <property type="nucleotide sequence ID" value="NC_006347.1"/>
</dbReference>
<dbReference type="SMR" id="Q64RE6"/>
<dbReference type="STRING" id="295405.BF3190"/>
<dbReference type="GeneID" id="60369483"/>
<dbReference type="KEGG" id="bfr:BF3190"/>
<dbReference type="PATRIC" id="fig|295405.11.peg.3057"/>
<dbReference type="HOGENOM" id="CLU_038115_1_0_10"/>
<dbReference type="OrthoDB" id="9801867at2"/>
<dbReference type="UniPathway" id="UPA00031">
    <property type="reaction ID" value="UER00006"/>
</dbReference>
<dbReference type="Proteomes" id="UP000002197">
    <property type="component" value="Chromosome"/>
</dbReference>
<dbReference type="GO" id="GO:0005737">
    <property type="term" value="C:cytoplasm"/>
    <property type="evidence" value="ECO:0007669"/>
    <property type="project" value="UniProtKB-SubCell"/>
</dbReference>
<dbReference type="GO" id="GO:0005524">
    <property type="term" value="F:ATP binding"/>
    <property type="evidence" value="ECO:0007669"/>
    <property type="project" value="UniProtKB-KW"/>
</dbReference>
<dbReference type="GO" id="GO:0003879">
    <property type="term" value="F:ATP phosphoribosyltransferase activity"/>
    <property type="evidence" value="ECO:0007669"/>
    <property type="project" value="UniProtKB-UniRule"/>
</dbReference>
<dbReference type="GO" id="GO:0000287">
    <property type="term" value="F:magnesium ion binding"/>
    <property type="evidence" value="ECO:0007669"/>
    <property type="project" value="UniProtKB-UniRule"/>
</dbReference>
<dbReference type="GO" id="GO:0000105">
    <property type="term" value="P:L-histidine biosynthetic process"/>
    <property type="evidence" value="ECO:0007669"/>
    <property type="project" value="UniProtKB-UniRule"/>
</dbReference>
<dbReference type="CDD" id="cd13592">
    <property type="entry name" value="PBP2_HisGL2"/>
    <property type="match status" value="1"/>
</dbReference>
<dbReference type="FunFam" id="3.30.70.120:FF:000002">
    <property type="entry name" value="ATP phosphoribosyltransferase"/>
    <property type="match status" value="1"/>
</dbReference>
<dbReference type="FunFam" id="3.40.190.10:FF:000008">
    <property type="entry name" value="ATP phosphoribosyltransferase"/>
    <property type="match status" value="1"/>
</dbReference>
<dbReference type="FunFam" id="3.40.190.10:FF:000082">
    <property type="entry name" value="ATP phosphoribosyltransferase"/>
    <property type="match status" value="1"/>
</dbReference>
<dbReference type="Gene3D" id="3.30.70.120">
    <property type="match status" value="1"/>
</dbReference>
<dbReference type="Gene3D" id="3.40.190.10">
    <property type="entry name" value="Periplasmic binding protein-like II"/>
    <property type="match status" value="2"/>
</dbReference>
<dbReference type="HAMAP" id="MF_00079">
    <property type="entry name" value="HisG_Long"/>
    <property type="match status" value="1"/>
</dbReference>
<dbReference type="InterPro" id="IPR020621">
    <property type="entry name" value="ATP-PRT_HisG_long"/>
</dbReference>
<dbReference type="InterPro" id="IPR013820">
    <property type="entry name" value="ATP_PRibTrfase_cat"/>
</dbReference>
<dbReference type="InterPro" id="IPR018198">
    <property type="entry name" value="ATP_PRibTrfase_CS"/>
</dbReference>
<dbReference type="InterPro" id="IPR001348">
    <property type="entry name" value="ATP_PRibTrfase_HisG"/>
</dbReference>
<dbReference type="InterPro" id="IPR013115">
    <property type="entry name" value="HisG_C"/>
</dbReference>
<dbReference type="InterPro" id="IPR011322">
    <property type="entry name" value="N-reg_PII-like_a/b"/>
</dbReference>
<dbReference type="InterPro" id="IPR015867">
    <property type="entry name" value="N-reg_PII/ATP_PRibTrfase_C"/>
</dbReference>
<dbReference type="NCBIfam" id="TIGR00070">
    <property type="entry name" value="hisG"/>
    <property type="match status" value="1"/>
</dbReference>
<dbReference type="NCBIfam" id="TIGR03455">
    <property type="entry name" value="HisG_C-term"/>
    <property type="match status" value="1"/>
</dbReference>
<dbReference type="PANTHER" id="PTHR21403:SF8">
    <property type="entry name" value="ATP PHOSPHORIBOSYLTRANSFERASE"/>
    <property type="match status" value="1"/>
</dbReference>
<dbReference type="PANTHER" id="PTHR21403">
    <property type="entry name" value="ATP PHOSPHORIBOSYLTRANSFERASE ATP-PRTASE"/>
    <property type="match status" value="1"/>
</dbReference>
<dbReference type="Pfam" id="PF01634">
    <property type="entry name" value="HisG"/>
    <property type="match status" value="1"/>
</dbReference>
<dbReference type="Pfam" id="PF08029">
    <property type="entry name" value="HisG_C"/>
    <property type="match status" value="1"/>
</dbReference>
<dbReference type="SUPFAM" id="SSF54913">
    <property type="entry name" value="GlnB-like"/>
    <property type="match status" value="1"/>
</dbReference>
<dbReference type="SUPFAM" id="SSF53850">
    <property type="entry name" value="Periplasmic binding protein-like II"/>
    <property type="match status" value="1"/>
</dbReference>
<dbReference type="PROSITE" id="PS01316">
    <property type="entry name" value="ATP_P_PHORIBOSYLTR"/>
    <property type="match status" value="1"/>
</dbReference>
<proteinExistence type="inferred from homology"/>
<sequence>MLRIAVQAKGRLFEETMALLEESDIKLSTTKRTLLVQSSNFPVEVLFLRDDDIPQSVATGVADLGIVGENEFVERQEDAEIIKRLGFSKCRLSLAMPKDIEYPGLSWFNGKKIATSYPGILDAFMKSNGVKAEVHVITGSVEVAPGIGLADAIFDIVSSGSTLVSNRLKEVEVVMRSEALLIGNKNMSKEKKEILDELLFRMDAVKTAEDKKYVLMNAPKDKLEDIIAVLPGMKSPTVMPLAQDGWCSVHTVLDEKRFWEIIGKLKALGAEGILVLPIEKMII</sequence>
<name>HIS1_BACFR</name>
<accession>Q64RE6</accession>
<keyword id="KW-0028">Amino-acid biosynthesis</keyword>
<keyword id="KW-0067">ATP-binding</keyword>
<keyword id="KW-0963">Cytoplasm</keyword>
<keyword id="KW-0328">Glycosyltransferase</keyword>
<keyword id="KW-0368">Histidine biosynthesis</keyword>
<keyword id="KW-0460">Magnesium</keyword>
<keyword id="KW-0479">Metal-binding</keyword>
<keyword id="KW-0547">Nucleotide-binding</keyword>
<keyword id="KW-0808">Transferase</keyword>
<protein>
    <recommendedName>
        <fullName evidence="1">ATP phosphoribosyltransferase</fullName>
        <shortName evidence="1">ATP-PRT</shortName>
        <shortName evidence="1">ATP-PRTase</shortName>
        <ecNumber evidence="1">2.4.2.17</ecNumber>
    </recommendedName>
</protein>
<gene>
    <name evidence="1" type="primary">hisG</name>
    <name type="ordered locus">BF3190</name>
</gene>
<reference key="1">
    <citation type="journal article" date="2004" name="Proc. Natl. Acad. Sci. U.S.A.">
        <title>Genomic analysis of Bacteroides fragilis reveals extensive DNA inversions regulating cell surface adaptation.</title>
        <authorList>
            <person name="Kuwahara T."/>
            <person name="Yamashita A."/>
            <person name="Hirakawa H."/>
            <person name="Nakayama H."/>
            <person name="Toh H."/>
            <person name="Okada N."/>
            <person name="Kuhara S."/>
            <person name="Hattori M."/>
            <person name="Hayashi T."/>
            <person name="Ohnishi Y."/>
        </authorList>
    </citation>
    <scope>NUCLEOTIDE SEQUENCE [LARGE SCALE GENOMIC DNA]</scope>
    <source>
        <strain>YCH46</strain>
    </source>
</reference>
<comment type="function">
    <text evidence="1">Catalyzes the condensation of ATP and 5-phosphoribose 1-diphosphate to form N'-(5'-phosphoribosyl)-ATP (PR-ATP). Has a crucial role in the pathway because the rate of histidine biosynthesis seems to be controlled primarily by regulation of HisG enzymatic activity.</text>
</comment>
<comment type="catalytic activity">
    <reaction evidence="1">
        <text>1-(5-phospho-beta-D-ribosyl)-ATP + diphosphate = 5-phospho-alpha-D-ribose 1-diphosphate + ATP</text>
        <dbReference type="Rhea" id="RHEA:18473"/>
        <dbReference type="ChEBI" id="CHEBI:30616"/>
        <dbReference type="ChEBI" id="CHEBI:33019"/>
        <dbReference type="ChEBI" id="CHEBI:58017"/>
        <dbReference type="ChEBI" id="CHEBI:73183"/>
        <dbReference type="EC" id="2.4.2.17"/>
    </reaction>
</comment>
<comment type="cofactor">
    <cofactor evidence="1">
        <name>Mg(2+)</name>
        <dbReference type="ChEBI" id="CHEBI:18420"/>
    </cofactor>
</comment>
<comment type="activity regulation">
    <text evidence="1">Feedback inhibited by histidine.</text>
</comment>
<comment type="pathway">
    <text evidence="1">Amino-acid biosynthesis; L-histidine biosynthesis; L-histidine from 5-phospho-alpha-D-ribose 1-diphosphate: step 1/9.</text>
</comment>
<comment type="subcellular location">
    <subcellularLocation>
        <location evidence="1">Cytoplasm</location>
    </subcellularLocation>
</comment>
<comment type="similarity">
    <text evidence="1">Belongs to the ATP phosphoribosyltransferase family. Long subfamily.</text>
</comment>
<organism>
    <name type="scientific">Bacteroides fragilis (strain YCH46)</name>
    <dbReference type="NCBI Taxonomy" id="295405"/>
    <lineage>
        <taxon>Bacteria</taxon>
        <taxon>Pseudomonadati</taxon>
        <taxon>Bacteroidota</taxon>
        <taxon>Bacteroidia</taxon>
        <taxon>Bacteroidales</taxon>
        <taxon>Bacteroidaceae</taxon>
        <taxon>Bacteroides</taxon>
    </lineage>
</organism>
<feature type="chain" id="PRO_1000004443" description="ATP phosphoribosyltransferase">
    <location>
        <begin position="1"/>
        <end position="283"/>
    </location>
</feature>
<evidence type="ECO:0000255" key="1">
    <source>
        <dbReference type="HAMAP-Rule" id="MF_00079"/>
    </source>
</evidence>